<dbReference type="EMBL" id="M63775">
    <property type="protein sequence ID" value="AAA52236.1"/>
    <property type="molecule type" value="Genomic_RNA"/>
</dbReference>
<dbReference type="SMR" id="P68881"/>
<dbReference type="GO" id="GO:0019029">
    <property type="term" value="C:helical viral capsid"/>
    <property type="evidence" value="ECO:0007669"/>
    <property type="project" value="UniProtKB-UniRule"/>
</dbReference>
<dbReference type="GO" id="GO:0043657">
    <property type="term" value="C:host cell"/>
    <property type="evidence" value="ECO:0007669"/>
    <property type="project" value="GOC"/>
</dbReference>
<dbReference type="GO" id="GO:0042025">
    <property type="term" value="C:host cell nucleus"/>
    <property type="evidence" value="ECO:0007669"/>
    <property type="project" value="UniProtKB-SubCell"/>
</dbReference>
<dbReference type="GO" id="GO:1990904">
    <property type="term" value="C:ribonucleoprotein complex"/>
    <property type="evidence" value="ECO:0007669"/>
    <property type="project" value="UniProtKB-KW"/>
</dbReference>
<dbReference type="GO" id="GO:0019013">
    <property type="term" value="C:viral nucleocapsid"/>
    <property type="evidence" value="ECO:0007669"/>
    <property type="project" value="UniProtKB-UniRule"/>
</dbReference>
<dbReference type="GO" id="GO:0003723">
    <property type="term" value="F:RNA binding"/>
    <property type="evidence" value="ECO:0007669"/>
    <property type="project" value="UniProtKB-UniRule"/>
</dbReference>
<dbReference type="GO" id="GO:0005198">
    <property type="term" value="F:structural molecule activity"/>
    <property type="evidence" value="ECO:0007669"/>
    <property type="project" value="UniProtKB-UniRule"/>
</dbReference>
<dbReference type="GO" id="GO:0046718">
    <property type="term" value="P:symbiont entry into host cell"/>
    <property type="evidence" value="ECO:0007669"/>
    <property type="project" value="UniProtKB-KW"/>
</dbReference>
<dbReference type="GO" id="GO:0075732">
    <property type="term" value="P:viral penetration into host nucleus"/>
    <property type="evidence" value="ECO:0007669"/>
    <property type="project" value="UniProtKB-UniRule"/>
</dbReference>
<dbReference type="HAMAP" id="MF_04070">
    <property type="entry name" value="INFV_NCAP"/>
    <property type="match status" value="1"/>
</dbReference>
<dbReference type="InterPro" id="IPR002141">
    <property type="entry name" value="Flu_NP"/>
</dbReference>
<dbReference type="Pfam" id="PF00506">
    <property type="entry name" value="Flu_NP"/>
    <property type="match status" value="1"/>
</dbReference>
<dbReference type="SUPFAM" id="SSF161003">
    <property type="entry name" value="flu NP-like"/>
    <property type="match status" value="1"/>
</dbReference>
<accession>P68881</accession>
<accession>P15680</accession>
<gene>
    <name evidence="1" type="primary">NP</name>
</gene>
<keyword id="KW-0167">Capsid protein</keyword>
<keyword id="KW-1139">Helical capsid protein</keyword>
<keyword id="KW-1048">Host nucleus</keyword>
<keyword id="KW-0945">Host-virus interaction</keyword>
<keyword id="KW-0687">Ribonucleoprotein</keyword>
<keyword id="KW-0694">RNA-binding</keyword>
<keyword id="KW-0543">Viral nucleoprotein</keyword>
<keyword id="KW-1163">Viral penetration into host nucleus</keyword>
<keyword id="KW-0946">Virion</keyword>
<keyword id="KW-1160">Virus entry into host cell</keyword>
<evidence type="ECO:0000255" key="1">
    <source>
        <dbReference type="HAMAP-Rule" id="MF_04070"/>
    </source>
</evidence>
<evidence type="ECO:0000256" key="2">
    <source>
        <dbReference type="SAM" id="MobiDB-lite"/>
    </source>
</evidence>
<feature type="chain" id="PRO_0000079041" description="Nucleoprotein">
    <location>
        <begin position="1"/>
        <end position="498"/>
    </location>
</feature>
<feature type="region of interest" description="Disordered" evidence="2">
    <location>
        <begin position="1"/>
        <end position="21"/>
    </location>
</feature>
<feature type="short sequence motif" description="Unconventional nuclear localization signal" evidence="1">
    <location>
        <begin position="1"/>
        <end position="18"/>
    </location>
</feature>
<feature type="short sequence motif" description="Bipartite nuclear localization signal" evidence="1">
    <location>
        <begin position="198"/>
        <end position="216"/>
    </location>
</feature>
<organism>
    <name type="scientific">Influenza A virus (strain A/Duck/Pennsylvania/1/1969 H6N1)</name>
    <dbReference type="NCBI Taxonomy" id="383554"/>
    <lineage>
        <taxon>Viruses</taxon>
        <taxon>Riboviria</taxon>
        <taxon>Orthornavirae</taxon>
        <taxon>Negarnaviricota</taxon>
        <taxon>Polyploviricotina</taxon>
        <taxon>Insthoviricetes</taxon>
        <taxon>Articulavirales</taxon>
        <taxon>Orthomyxoviridae</taxon>
        <taxon>Alphainfluenzavirus</taxon>
        <taxon>Alphainfluenzavirus influenzae</taxon>
        <taxon>Influenza A virus</taxon>
    </lineage>
</organism>
<name>NCAP_I69A1</name>
<comment type="function">
    <text evidence="1">Encapsidates the negative strand viral RNA, protecting it from nucleases. The encapsidated genomic RNA is termed the ribonucleoprotein (RNP) and serves as template for transcription and replication. The RNP needs to be localized in the host nucleus to start an infectious cycle, but is too large to diffuse through the nuclear pore complex. NP comprises at least 2 nuclear localization signals that are responsible for the active RNP import into the nucleus through cellular importin alpha/beta pathway. Later in the infection, nclear export of RNPs are mediated through viral proteins NEP interacting with M1 which binds nucleoproteins. It is possible that nucleoprotein binds directly host exportin-1/XPO1 and plays an active role in RNPs nuclear export. M1 interaction with RNP seems to hide nucleoprotein's nuclear localization signals. Soon after a virion infects a new cell, M1 dissociates from the RNP under acidification of the virion driven by M2 protein. Dissociation of M1 from RNP unmasks nucleoprotein's nuclear localization signals, targeting the RNP to the nucleus.</text>
</comment>
<comment type="subunit">
    <text evidence="1">Homomultimerizes to form the nucleocapsid. May bind host exportin-1/XPO1. Binds to viral genomic RNA. Protein-RNA contacts are mediated by a combination of electrostatic interactions between positively charged residues and the phosphate backbone and planar interactions between aromatic side chains and bases.</text>
</comment>
<comment type="subcellular location">
    <subcellularLocation>
        <location evidence="1">Virion</location>
    </subcellularLocation>
    <subcellularLocation>
        <location evidence="1">Host nucleus</location>
    </subcellularLocation>
</comment>
<comment type="PTM">
    <text evidence="1">Late in virus-infected cells, may be cleaved from a 56-kDa protein to a 53-kDa protein by a cellular caspase. This cleavage might be a marker for the onset of apoptosis in infected cells or have a specific function in virus host interaction.</text>
</comment>
<comment type="similarity">
    <text evidence="1">Belongs to the influenza viruses nucleoprotein family.</text>
</comment>
<proteinExistence type="inferred from homology"/>
<protein>
    <recommendedName>
        <fullName evidence="1">Nucleoprotein</fullName>
    </recommendedName>
    <alternativeName>
        <fullName evidence="1">Nucleocapsid protein</fullName>
        <shortName evidence="1">Protein N</shortName>
    </alternativeName>
</protein>
<sequence>MASQGTKRSYEQMETGGERQNATEIRASVGRMVGGIGRFYIQMCTELKLSDYEGRLIQNSITIERMVLSAFDERRNKYLEEHPSAGKDPKKTGGPIYRRRDGKWVRELILYDKEEIRRIWRQANNGEDATAGLTHLMIWHSNLNDATYQRTRALVRTGMDPRMCSLMQGSTLPRRSGAAGAAVKGVGTMVMELIRMIKRGINDRNFWRGENGRRTRIAYERMCNILKGKFQTAAQRAMMDQVRESRNPGNAEIEDLIFLARSALILRGSVAHKSCLPACVYGLAVASGYDFEREGYSLVGIDPFRLLQNSQVFSLIRPNENPAHKSQLVWMACHSAAFEDLRVSSFIRGTRVVPRGQLSTRGVQIASNENMETMDSSTLELRSRYWAIRTRSGGNTNQQRASAGQISVQPTFSVQRNLPFERATIMAAFTGNTEGRTSDMRTEIIRMMENARPEDVSFQGRGVFELSDEKATNPIVPSFDMSNEGSYFFGDNAEEYDN</sequence>
<organismHost>
    <name type="scientific">Aves</name>
    <dbReference type="NCBI Taxonomy" id="8782"/>
</organismHost>
<reference key="1">
    <citation type="journal article" date="1991" name="J. Virol.">
        <title>Evolution of influenza A virus nucleoprotein genes: implications for the origins of H1N1 human and classical swine viruses.</title>
        <authorList>
            <person name="Gorman O.T."/>
            <person name="Bean W.J."/>
            <person name="Kawaoka Y."/>
            <person name="Donatelli I."/>
            <person name="Guo Y."/>
            <person name="Webster R.G."/>
        </authorList>
    </citation>
    <scope>NUCLEOTIDE SEQUENCE [GENOMIC RNA]</scope>
    <source>
        <strain>A/Duck/Memphis/928/74</strain>
        <strain>A/Duck/Pennsylvania/1/69</strain>
    </source>
</reference>